<gene>
    <name type="primary">Gpr146</name>
</gene>
<name>GP146_MOUSE</name>
<proteinExistence type="evidence at protein level"/>
<reference key="1">
    <citation type="journal article" date="2005" name="Science">
        <title>The transcriptional landscape of the mammalian genome.</title>
        <authorList>
            <person name="Carninci P."/>
            <person name="Kasukawa T."/>
            <person name="Katayama S."/>
            <person name="Gough J."/>
            <person name="Frith M.C."/>
            <person name="Maeda N."/>
            <person name="Oyama R."/>
            <person name="Ravasi T."/>
            <person name="Lenhard B."/>
            <person name="Wells C."/>
            <person name="Kodzius R."/>
            <person name="Shimokawa K."/>
            <person name="Bajic V.B."/>
            <person name="Brenner S.E."/>
            <person name="Batalov S."/>
            <person name="Forrest A.R."/>
            <person name="Zavolan M."/>
            <person name="Davis M.J."/>
            <person name="Wilming L.G."/>
            <person name="Aidinis V."/>
            <person name="Allen J.E."/>
            <person name="Ambesi-Impiombato A."/>
            <person name="Apweiler R."/>
            <person name="Aturaliya R.N."/>
            <person name="Bailey T.L."/>
            <person name="Bansal M."/>
            <person name="Baxter L."/>
            <person name="Beisel K.W."/>
            <person name="Bersano T."/>
            <person name="Bono H."/>
            <person name="Chalk A.M."/>
            <person name="Chiu K.P."/>
            <person name="Choudhary V."/>
            <person name="Christoffels A."/>
            <person name="Clutterbuck D.R."/>
            <person name="Crowe M.L."/>
            <person name="Dalla E."/>
            <person name="Dalrymple B.P."/>
            <person name="de Bono B."/>
            <person name="Della Gatta G."/>
            <person name="di Bernardo D."/>
            <person name="Down T."/>
            <person name="Engstrom P."/>
            <person name="Fagiolini M."/>
            <person name="Faulkner G."/>
            <person name="Fletcher C.F."/>
            <person name="Fukushima T."/>
            <person name="Furuno M."/>
            <person name="Futaki S."/>
            <person name="Gariboldi M."/>
            <person name="Georgii-Hemming P."/>
            <person name="Gingeras T.R."/>
            <person name="Gojobori T."/>
            <person name="Green R.E."/>
            <person name="Gustincich S."/>
            <person name="Harbers M."/>
            <person name="Hayashi Y."/>
            <person name="Hensch T.K."/>
            <person name="Hirokawa N."/>
            <person name="Hill D."/>
            <person name="Huminiecki L."/>
            <person name="Iacono M."/>
            <person name="Ikeo K."/>
            <person name="Iwama A."/>
            <person name="Ishikawa T."/>
            <person name="Jakt M."/>
            <person name="Kanapin A."/>
            <person name="Katoh M."/>
            <person name="Kawasawa Y."/>
            <person name="Kelso J."/>
            <person name="Kitamura H."/>
            <person name="Kitano H."/>
            <person name="Kollias G."/>
            <person name="Krishnan S.P."/>
            <person name="Kruger A."/>
            <person name="Kummerfeld S.K."/>
            <person name="Kurochkin I.V."/>
            <person name="Lareau L.F."/>
            <person name="Lazarevic D."/>
            <person name="Lipovich L."/>
            <person name="Liu J."/>
            <person name="Liuni S."/>
            <person name="McWilliam S."/>
            <person name="Madan Babu M."/>
            <person name="Madera M."/>
            <person name="Marchionni L."/>
            <person name="Matsuda H."/>
            <person name="Matsuzawa S."/>
            <person name="Miki H."/>
            <person name="Mignone F."/>
            <person name="Miyake S."/>
            <person name="Morris K."/>
            <person name="Mottagui-Tabar S."/>
            <person name="Mulder N."/>
            <person name="Nakano N."/>
            <person name="Nakauchi H."/>
            <person name="Ng P."/>
            <person name="Nilsson R."/>
            <person name="Nishiguchi S."/>
            <person name="Nishikawa S."/>
            <person name="Nori F."/>
            <person name="Ohara O."/>
            <person name="Okazaki Y."/>
            <person name="Orlando V."/>
            <person name="Pang K.C."/>
            <person name="Pavan W.J."/>
            <person name="Pavesi G."/>
            <person name="Pesole G."/>
            <person name="Petrovsky N."/>
            <person name="Piazza S."/>
            <person name="Reed J."/>
            <person name="Reid J.F."/>
            <person name="Ring B.Z."/>
            <person name="Ringwald M."/>
            <person name="Rost B."/>
            <person name="Ruan Y."/>
            <person name="Salzberg S.L."/>
            <person name="Sandelin A."/>
            <person name="Schneider C."/>
            <person name="Schoenbach C."/>
            <person name="Sekiguchi K."/>
            <person name="Semple C.A."/>
            <person name="Seno S."/>
            <person name="Sessa L."/>
            <person name="Sheng Y."/>
            <person name="Shibata Y."/>
            <person name="Shimada H."/>
            <person name="Shimada K."/>
            <person name="Silva D."/>
            <person name="Sinclair B."/>
            <person name="Sperling S."/>
            <person name="Stupka E."/>
            <person name="Sugiura K."/>
            <person name="Sultana R."/>
            <person name="Takenaka Y."/>
            <person name="Taki K."/>
            <person name="Tammoja K."/>
            <person name="Tan S.L."/>
            <person name="Tang S."/>
            <person name="Taylor M.S."/>
            <person name="Tegner J."/>
            <person name="Teichmann S.A."/>
            <person name="Ueda H.R."/>
            <person name="van Nimwegen E."/>
            <person name="Verardo R."/>
            <person name="Wei C.L."/>
            <person name="Yagi K."/>
            <person name="Yamanishi H."/>
            <person name="Zabarovsky E."/>
            <person name="Zhu S."/>
            <person name="Zimmer A."/>
            <person name="Hide W."/>
            <person name="Bult C."/>
            <person name="Grimmond S.M."/>
            <person name="Teasdale R.D."/>
            <person name="Liu E.T."/>
            <person name="Brusic V."/>
            <person name="Quackenbush J."/>
            <person name="Wahlestedt C."/>
            <person name="Mattick J.S."/>
            <person name="Hume D.A."/>
            <person name="Kai C."/>
            <person name="Sasaki D."/>
            <person name="Tomaru Y."/>
            <person name="Fukuda S."/>
            <person name="Kanamori-Katayama M."/>
            <person name="Suzuki M."/>
            <person name="Aoki J."/>
            <person name="Arakawa T."/>
            <person name="Iida J."/>
            <person name="Imamura K."/>
            <person name="Itoh M."/>
            <person name="Kato T."/>
            <person name="Kawaji H."/>
            <person name="Kawagashira N."/>
            <person name="Kawashima T."/>
            <person name="Kojima M."/>
            <person name="Kondo S."/>
            <person name="Konno H."/>
            <person name="Nakano K."/>
            <person name="Ninomiya N."/>
            <person name="Nishio T."/>
            <person name="Okada M."/>
            <person name="Plessy C."/>
            <person name="Shibata K."/>
            <person name="Shiraki T."/>
            <person name="Suzuki S."/>
            <person name="Tagami M."/>
            <person name="Waki K."/>
            <person name="Watahiki A."/>
            <person name="Okamura-Oho Y."/>
            <person name="Suzuki H."/>
            <person name="Kawai J."/>
            <person name="Hayashizaki Y."/>
        </authorList>
    </citation>
    <scope>NUCLEOTIDE SEQUENCE [LARGE SCALE MRNA]</scope>
    <source>
        <strain>C57BL/6J</strain>
        <strain>NOD</strain>
        <tissue>Bone</tissue>
        <tissue>Corpora quadrigemina</tissue>
        <tissue>Lung</tissue>
    </source>
</reference>
<reference key="2">
    <citation type="submission" date="2005-09" db="EMBL/GenBank/DDBJ databases">
        <authorList>
            <person name="Mural R.J."/>
            <person name="Adams M.D."/>
            <person name="Myers E.W."/>
            <person name="Smith H.O."/>
            <person name="Venter J.C."/>
        </authorList>
    </citation>
    <scope>NUCLEOTIDE SEQUENCE [LARGE SCALE GENOMIC DNA]</scope>
</reference>
<reference key="3">
    <citation type="journal article" date="2004" name="Genome Res.">
        <title>The status, quality, and expansion of the NIH full-length cDNA project: the Mammalian Gene Collection (MGC).</title>
        <authorList>
            <consortium name="The MGC Project Team"/>
        </authorList>
    </citation>
    <scope>NUCLEOTIDE SEQUENCE [LARGE SCALE MRNA]</scope>
    <source>
        <strain>FVB/N</strain>
        <tissue>Mammary tumor</tissue>
    </source>
</reference>
<reference key="4">
    <citation type="journal article" date="2019" name="Cell">
        <title>GPR146 Deficiency Protects against Hypercholesterolemia and Atherosclerosis.</title>
        <authorList>
            <consortium name="BIOS Consortium"/>
            <person name="Yu H."/>
            <person name="Rimbert A."/>
            <person name="Palmer A.E."/>
            <person name="Toyohara T."/>
            <person name="Xia Y."/>
            <person name="Xia F."/>
            <person name="Ferreira L.M.R."/>
            <person name="Chen Z."/>
            <person name="Chen T."/>
            <person name="Loaiza N."/>
            <person name="Horwitz N.B."/>
            <person name="Kacergis M.C."/>
            <person name="Zhao L."/>
            <person name="Soukas A.A."/>
            <person name="Kuivenhoven J.A."/>
            <person name="Kathiresan S."/>
            <person name="Cowan C.A."/>
        </authorList>
    </citation>
    <scope>FUNCTION</scope>
</reference>
<reference key="5">
    <citation type="journal article" date="2024" name="Cell">
        <title>A gut-derived hormone regulates cholesterol metabolism.</title>
        <authorList>
            <person name="Hu X."/>
            <person name="Chen F."/>
            <person name="Jia L."/>
            <person name="Long A."/>
            <person name="Peng Y."/>
            <person name="Li X."/>
            <person name="Huang J."/>
            <person name="Wei X."/>
            <person name="Fang X."/>
            <person name="Gao Z."/>
            <person name="Zhang M."/>
            <person name="Liu X."/>
            <person name="Chen Y.G."/>
            <person name="Wang Y."/>
            <person name="Zhang H."/>
            <person name="Wang Y."/>
        </authorList>
    </citation>
    <scope>FUNCTION</scope>
    <scope>SUBCELLULAR LOCATION</scope>
    <scope>MUTAGENESIS OF ARG-90; HIS-101; HIS-169; ARG-179; ASP-187 AND GLU-265</scope>
</reference>
<evidence type="ECO:0000255" key="1"/>
<evidence type="ECO:0000255" key="2">
    <source>
        <dbReference type="PROSITE-ProRule" id="PRU00521"/>
    </source>
</evidence>
<evidence type="ECO:0000269" key="3">
    <source>
    </source>
</evidence>
<evidence type="ECO:0000269" key="4">
    <source>
    </source>
</evidence>
<evidence type="ECO:0000305" key="5"/>
<evidence type="ECO:0000305" key="6">
    <source>
    </source>
</evidence>
<organism>
    <name type="scientific">Mus musculus</name>
    <name type="common">Mouse</name>
    <dbReference type="NCBI Taxonomy" id="10090"/>
    <lineage>
        <taxon>Eukaryota</taxon>
        <taxon>Metazoa</taxon>
        <taxon>Chordata</taxon>
        <taxon>Craniata</taxon>
        <taxon>Vertebrata</taxon>
        <taxon>Euteleostomi</taxon>
        <taxon>Mammalia</taxon>
        <taxon>Eutheria</taxon>
        <taxon>Euarchontoglires</taxon>
        <taxon>Glires</taxon>
        <taxon>Rodentia</taxon>
        <taxon>Myomorpha</taxon>
        <taxon>Muroidea</taxon>
        <taxon>Muridae</taxon>
        <taxon>Murinae</taxon>
        <taxon>Mus</taxon>
        <taxon>Mus</taxon>
    </lineage>
</organism>
<accession>Q99LE2</accession>
<accession>Q3U3K8</accession>
<accession>Q3U421</accession>
<accession>Q8BHR6</accession>
<accession>Q8BHU4</accession>
<comment type="function">
    <text evidence="3 4">GPCR receptor required for the regulation of plasma cholesterol levels (PubMed:31778654, PubMed:38503280). Receptor for CHLSN, a gut derived hormone which mediates an inhibitory effect of intestinal cholesterol absorption on hepatic cholesterol synthesis. Cholesin-binding exerts an antagonistic effect by inhibiting PKA signaling and suppressing SREBF2-controlled cholesterol in the liver (PubMed:38503280).</text>
</comment>
<comment type="subcellular location">
    <subcellularLocation>
        <location evidence="6">Cell membrane</location>
        <topology evidence="1">Multi-pass membrane protein</topology>
    </subcellularLocation>
</comment>
<comment type="similarity">
    <text evidence="2">Belongs to the G-protein coupled receptor 1 family.</text>
</comment>
<dbReference type="EMBL" id="AK046512">
    <property type="protein sequence ID" value="BAC32762.1"/>
    <property type="molecule type" value="mRNA"/>
</dbReference>
<dbReference type="EMBL" id="AK087100">
    <property type="protein sequence ID" value="BAC39803.1"/>
    <property type="molecule type" value="mRNA"/>
</dbReference>
<dbReference type="EMBL" id="AK089232">
    <property type="protein sequence ID" value="BAC40804.1"/>
    <property type="molecule type" value="mRNA"/>
</dbReference>
<dbReference type="EMBL" id="AK154478">
    <property type="protein sequence ID" value="BAE32614.1"/>
    <property type="molecule type" value="mRNA"/>
</dbReference>
<dbReference type="EMBL" id="AK137454">
    <property type="protein sequence ID" value="BAE23357.1"/>
    <property type="molecule type" value="mRNA"/>
</dbReference>
<dbReference type="EMBL" id="AK154708">
    <property type="protein sequence ID" value="BAE32777.1"/>
    <property type="molecule type" value="mRNA"/>
</dbReference>
<dbReference type="EMBL" id="AK155876">
    <property type="protein sequence ID" value="BAE33478.1"/>
    <property type="molecule type" value="mRNA"/>
</dbReference>
<dbReference type="EMBL" id="CH466529">
    <property type="protein sequence ID" value="EDL19154.1"/>
    <property type="molecule type" value="Genomic_DNA"/>
</dbReference>
<dbReference type="EMBL" id="BC003323">
    <property type="protein sequence ID" value="AAH03323.1"/>
    <property type="molecule type" value="mRNA"/>
</dbReference>
<dbReference type="CCDS" id="CCDS19809.1"/>
<dbReference type="RefSeq" id="NP_001033792.1">
    <property type="nucleotide sequence ID" value="NM_001038703.3"/>
</dbReference>
<dbReference type="RefSeq" id="NP_001349135.1">
    <property type="nucleotide sequence ID" value="NM_001362206.1"/>
</dbReference>
<dbReference type="RefSeq" id="NP_084534.2">
    <property type="nucleotide sequence ID" value="NM_030258.4"/>
</dbReference>
<dbReference type="RefSeq" id="XP_006504837.1">
    <property type="nucleotide sequence ID" value="XM_006504774.2"/>
</dbReference>
<dbReference type="RefSeq" id="XP_030110776.1">
    <property type="nucleotide sequence ID" value="XM_030254916.2"/>
</dbReference>
<dbReference type="SMR" id="Q99LE2"/>
<dbReference type="CORUM" id="Q99LE2"/>
<dbReference type="FunCoup" id="Q99LE2">
    <property type="interactions" value="1094"/>
</dbReference>
<dbReference type="STRING" id="10090.ENSMUSP00000098083"/>
<dbReference type="GlyCosmos" id="Q99LE2">
    <property type="glycosylation" value="1 site, No reported glycans"/>
</dbReference>
<dbReference type="GlyGen" id="Q99LE2">
    <property type="glycosylation" value="1 site"/>
</dbReference>
<dbReference type="PhosphoSitePlus" id="Q99LE2"/>
<dbReference type="PaxDb" id="10090-ENSMUSP00000098083"/>
<dbReference type="ProteomicsDB" id="267649"/>
<dbReference type="Antibodypedia" id="10880">
    <property type="antibodies" value="281 antibodies from 30 providers"/>
</dbReference>
<dbReference type="DNASU" id="80290"/>
<dbReference type="Ensembl" id="ENSMUST00000051293.8">
    <property type="protein sequence ID" value="ENSMUSP00000049707.8"/>
    <property type="gene ID" value="ENSMUSG00000044197.9"/>
</dbReference>
<dbReference type="Ensembl" id="ENSMUST00000100514.3">
    <property type="protein sequence ID" value="ENSMUSP00000098083.3"/>
    <property type="gene ID" value="ENSMUSG00000044197.9"/>
</dbReference>
<dbReference type="GeneID" id="80290"/>
<dbReference type="KEGG" id="mmu:80290"/>
<dbReference type="UCSC" id="uc009agm.2">
    <property type="organism name" value="mouse"/>
</dbReference>
<dbReference type="AGR" id="MGI:1933113"/>
<dbReference type="CTD" id="115330"/>
<dbReference type="MGI" id="MGI:1933113">
    <property type="gene designation" value="Gpr146"/>
</dbReference>
<dbReference type="VEuPathDB" id="HostDB:ENSMUSG00000044197"/>
<dbReference type="eggNOG" id="ENOG502QPPG">
    <property type="taxonomic scope" value="Eukaryota"/>
</dbReference>
<dbReference type="GeneTree" id="ENSGT01030000234518"/>
<dbReference type="HOGENOM" id="CLU_065932_0_0_1"/>
<dbReference type="InParanoid" id="Q99LE2"/>
<dbReference type="OMA" id="YICSHVA"/>
<dbReference type="OrthoDB" id="8660770at2759"/>
<dbReference type="PhylomeDB" id="Q99LE2"/>
<dbReference type="TreeFam" id="TF333506"/>
<dbReference type="BioGRID-ORCS" id="80290">
    <property type="hits" value="4 hits in 77 CRISPR screens"/>
</dbReference>
<dbReference type="ChiTaRS" id="Gpr146">
    <property type="organism name" value="mouse"/>
</dbReference>
<dbReference type="PRO" id="PR:Q99LE2"/>
<dbReference type="Proteomes" id="UP000000589">
    <property type="component" value="Chromosome 5"/>
</dbReference>
<dbReference type="RNAct" id="Q99LE2">
    <property type="molecule type" value="protein"/>
</dbReference>
<dbReference type="Bgee" id="ENSMUSG00000044197">
    <property type="expression patterns" value="Expressed in interventricular septum and 189 other cell types or tissues"/>
</dbReference>
<dbReference type="ExpressionAtlas" id="Q99LE2">
    <property type="expression patterns" value="baseline and differential"/>
</dbReference>
<dbReference type="GO" id="GO:0005886">
    <property type="term" value="C:plasma membrane"/>
    <property type="evidence" value="ECO:0000314"/>
    <property type="project" value="UniProtKB"/>
</dbReference>
<dbReference type="GO" id="GO:0004930">
    <property type="term" value="F:G protein-coupled receptor activity"/>
    <property type="evidence" value="ECO:0007669"/>
    <property type="project" value="UniProtKB-KW"/>
</dbReference>
<dbReference type="GO" id="GO:0007193">
    <property type="term" value="P:adenylate cyclase-inhibiting G protein-coupled receptor signaling pathway"/>
    <property type="evidence" value="ECO:0007669"/>
    <property type="project" value="Ensembl"/>
</dbReference>
<dbReference type="GO" id="GO:0051607">
    <property type="term" value="P:defense response to virus"/>
    <property type="evidence" value="ECO:0000314"/>
    <property type="project" value="MGI"/>
</dbReference>
<dbReference type="GO" id="GO:0045540">
    <property type="term" value="P:regulation of cholesterol biosynthetic process"/>
    <property type="evidence" value="ECO:0007669"/>
    <property type="project" value="Ensembl"/>
</dbReference>
<dbReference type="GO" id="GO:0035456">
    <property type="term" value="P:response to interferon-beta"/>
    <property type="evidence" value="ECO:0000314"/>
    <property type="project" value="MGI"/>
</dbReference>
<dbReference type="GO" id="GO:0034341">
    <property type="term" value="P:response to type II interferon"/>
    <property type="evidence" value="ECO:0000314"/>
    <property type="project" value="MGI"/>
</dbReference>
<dbReference type="GO" id="GO:0009615">
    <property type="term" value="P:response to virus"/>
    <property type="evidence" value="ECO:0000314"/>
    <property type="project" value="MGI"/>
</dbReference>
<dbReference type="CDD" id="cd14990">
    <property type="entry name" value="7tmA_GPR146"/>
    <property type="match status" value="1"/>
</dbReference>
<dbReference type="FunFam" id="1.20.1070.10:FF:000272">
    <property type="entry name" value="G protein-coupled receptor 146"/>
    <property type="match status" value="1"/>
</dbReference>
<dbReference type="Gene3D" id="1.20.1070.10">
    <property type="entry name" value="Rhodopsin 7-helix transmembrane proteins"/>
    <property type="match status" value="1"/>
</dbReference>
<dbReference type="InterPro" id="IPR000276">
    <property type="entry name" value="GPCR_Rhodpsn"/>
</dbReference>
<dbReference type="InterPro" id="IPR017452">
    <property type="entry name" value="GPCR_Rhodpsn_7TM"/>
</dbReference>
<dbReference type="InterPro" id="IPR047143">
    <property type="entry name" value="GPER1-like"/>
</dbReference>
<dbReference type="InterPro" id="IPR037487">
    <property type="entry name" value="GPR146"/>
</dbReference>
<dbReference type="PANTHER" id="PTHR24226:SF3">
    <property type="entry name" value="G-PROTEIN COUPLED RECEPTOR 146-RELATED"/>
    <property type="match status" value="1"/>
</dbReference>
<dbReference type="PANTHER" id="PTHR24226">
    <property type="entry name" value="G-PROTEIN COUPLED RECEPTOR 182 AND ESTROGEN RECEPTOR 1"/>
    <property type="match status" value="1"/>
</dbReference>
<dbReference type="Pfam" id="PF00001">
    <property type="entry name" value="7tm_1"/>
    <property type="match status" value="1"/>
</dbReference>
<dbReference type="PRINTS" id="PR00237">
    <property type="entry name" value="GPCRRHODOPSN"/>
</dbReference>
<dbReference type="SUPFAM" id="SSF81321">
    <property type="entry name" value="Family A G protein-coupled receptor-like"/>
    <property type="match status" value="1"/>
</dbReference>
<dbReference type="PROSITE" id="PS50262">
    <property type="entry name" value="G_PROTEIN_RECEP_F1_2"/>
    <property type="match status" value="1"/>
</dbReference>
<sequence>MWSCGPLNSTAWAEEPLCRNLRLGLWVLSLLYLGAGVPVSLGYNALLVLANLASKNTMTMPDVYFVNMAVAGLVLTALAPAYLLGPAHSRWALWSLSSEAHVTLLILFNVASLVTMYSTALLSLDYYIERALPRTYMASVYNTRHVCGFVWGGAVLTSFSSLLFYICSHVSSRIAECARMQNTEAADAILVLIGYVVPGLAVLYALALISRIGKEDTPLDQDTSRLDPSVHRLLVATVCTQFGLWTPYYLSLGHTVLTSRGRTVEGHYLGILQVAKDLAKFLAFSSSSVTPLLYRYINKAFPGKLRRLMKKMHCGRRHCSPDPSGIQQVMAQA</sequence>
<keyword id="KW-1003">Cell membrane</keyword>
<keyword id="KW-0297">G-protein coupled receptor</keyword>
<keyword id="KW-0325">Glycoprotein</keyword>
<keyword id="KW-0472">Membrane</keyword>
<keyword id="KW-0675">Receptor</keyword>
<keyword id="KW-1185">Reference proteome</keyword>
<keyword id="KW-0807">Transducer</keyword>
<keyword id="KW-0812">Transmembrane</keyword>
<keyword id="KW-1133">Transmembrane helix</keyword>
<protein>
    <recommendedName>
        <fullName>G-protein coupled receptor 146</fullName>
    </recommendedName>
</protein>
<feature type="chain" id="PRO_0000069623" description="G-protein coupled receptor 146">
    <location>
        <begin position="1"/>
        <end position="333"/>
    </location>
</feature>
<feature type="topological domain" description="Extracellular" evidence="1">
    <location>
        <begin position="1"/>
        <end position="22"/>
    </location>
</feature>
<feature type="transmembrane region" description="Helical; Name=1" evidence="1">
    <location>
        <begin position="23"/>
        <end position="43"/>
    </location>
</feature>
<feature type="topological domain" description="Cytoplasmic" evidence="1">
    <location>
        <begin position="44"/>
        <end position="64"/>
    </location>
</feature>
<feature type="transmembrane region" description="Helical; Name=2" evidence="1">
    <location>
        <begin position="65"/>
        <end position="85"/>
    </location>
</feature>
<feature type="topological domain" description="Extracellular" evidence="1">
    <location>
        <begin position="86"/>
        <end position="101"/>
    </location>
</feature>
<feature type="transmembrane region" description="Helical; Name=3" evidence="1">
    <location>
        <begin position="102"/>
        <end position="122"/>
    </location>
</feature>
<feature type="topological domain" description="Cytoplasmic" evidence="1">
    <location>
        <begin position="123"/>
        <end position="145"/>
    </location>
</feature>
<feature type="transmembrane region" description="Helical; Name=4" evidence="1">
    <location>
        <begin position="146"/>
        <end position="166"/>
    </location>
</feature>
<feature type="topological domain" description="Extracellular" evidence="1">
    <location>
        <begin position="167"/>
        <end position="188"/>
    </location>
</feature>
<feature type="transmembrane region" description="Helical; Name=5" evidence="1">
    <location>
        <begin position="189"/>
        <end position="209"/>
    </location>
</feature>
<feature type="topological domain" description="Cytoplasmic" evidence="1">
    <location>
        <begin position="210"/>
        <end position="232"/>
    </location>
</feature>
<feature type="transmembrane region" description="Helical; Name=6" evidence="1">
    <location>
        <begin position="233"/>
        <end position="253"/>
    </location>
</feature>
<feature type="topological domain" description="Extracellular" evidence="1">
    <location>
        <begin position="254"/>
        <end position="277"/>
    </location>
</feature>
<feature type="transmembrane region" description="Helical; Name=7" evidence="1">
    <location>
        <begin position="278"/>
        <end position="298"/>
    </location>
</feature>
<feature type="topological domain" description="Cytoplasmic" evidence="1">
    <location>
        <begin position="299"/>
        <end position="333"/>
    </location>
</feature>
<feature type="glycosylation site" description="N-linked (GlcNAc...) asparagine" evidence="1">
    <location>
        <position position="8"/>
    </location>
</feature>
<feature type="mutagenesis site" description="Decreased affinity for CHLSN; when associated with A-101, A-169, A-179, A-187 and A-265." evidence="4">
    <original>R</original>
    <variation>A</variation>
    <location>
        <position position="90"/>
    </location>
</feature>
<feature type="mutagenesis site" description="Decreased affinity for CHLSN; when associated with A-90, A-169, A-179, A-187 and A-265." evidence="4">
    <original>H</original>
    <variation>A</variation>
    <location>
        <position position="101"/>
    </location>
</feature>
<feature type="mutagenesis site" description="Decreased affinity for CHLSN; when associated with A-90, A-101, A-179, A-187 and A-265." evidence="4">
    <original>H</original>
    <variation>A</variation>
    <location>
        <position position="169"/>
    </location>
</feature>
<feature type="mutagenesis site" description="Decreased affinity for CHLSN; when associated with A-90, A-101, A-169, A-187 and A-265." evidence="4">
    <original>R</original>
    <variation>A</variation>
    <location>
        <position position="179"/>
    </location>
</feature>
<feature type="mutagenesis site" description="Decreased affinity for CHLSN; when associated with A-90, A-101, A-169, A-179 and A-265." evidence="4">
    <original>D</original>
    <variation>A</variation>
    <location>
        <position position="187"/>
    </location>
</feature>
<feature type="mutagenesis site" description="Decreased affinity for CHLSN; when associated with A-90, A-101, A-169, A-179 and A-187." evidence="4">
    <original>E</original>
    <variation>A</variation>
    <location>
        <position position="265"/>
    </location>
</feature>
<feature type="sequence conflict" description="In Ref. 1; BAC40804/BAE32614 and 3; AAH03323." evidence="5" ref="1 3">
    <original>L</original>
    <variation>V</variation>
    <location>
        <position position="192"/>
    </location>
</feature>
<feature type="sequence conflict" description="In Ref. 1; BAC39803." evidence="5" ref="1">
    <original>A</original>
    <variation>P</variation>
    <location>
        <position position="283"/>
    </location>
</feature>